<protein>
    <recommendedName>
        <fullName evidence="1">Small ribosomal subunit protein uS9</fullName>
    </recommendedName>
    <alternativeName>
        <fullName evidence="2">30S ribosomal protein S9</fullName>
    </alternativeName>
</protein>
<feature type="chain" id="PRO_1000211841" description="Small ribosomal subunit protein uS9">
    <location>
        <begin position="1"/>
        <end position="130"/>
    </location>
</feature>
<evidence type="ECO:0000255" key="1">
    <source>
        <dbReference type="HAMAP-Rule" id="MF_00532"/>
    </source>
</evidence>
<evidence type="ECO:0000305" key="2"/>
<organism>
    <name type="scientific">Pseudomonas fluorescens (strain SBW25)</name>
    <dbReference type="NCBI Taxonomy" id="216595"/>
    <lineage>
        <taxon>Bacteria</taxon>
        <taxon>Pseudomonadati</taxon>
        <taxon>Pseudomonadota</taxon>
        <taxon>Gammaproteobacteria</taxon>
        <taxon>Pseudomonadales</taxon>
        <taxon>Pseudomonadaceae</taxon>
        <taxon>Pseudomonas</taxon>
    </lineage>
</organism>
<dbReference type="EMBL" id="AM181176">
    <property type="protein sequence ID" value="CAY47108.1"/>
    <property type="molecule type" value="Genomic_DNA"/>
</dbReference>
<dbReference type="RefSeq" id="WP_003171743.1">
    <property type="nucleotide sequence ID" value="NC_012660.1"/>
</dbReference>
<dbReference type="SMR" id="C3K6E2"/>
<dbReference type="STRING" id="294.SRM1_04741"/>
<dbReference type="GeneID" id="97827428"/>
<dbReference type="eggNOG" id="COG0103">
    <property type="taxonomic scope" value="Bacteria"/>
</dbReference>
<dbReference type="HOGENOM" id="CLU_046483_2_1_6"/>
<dbReference type="OrthoDB" id="9803965at2"/>
<dbReference type="GO" id="GO:0022627">
    <property type="term" value="C:cytosolic small ribosomal subunit"/>
    <property type="evidence" value="ECO:0007669"/>
    <property type="project" value="TreeGrafter"/>
</dbReference>
<dbReference type="GO" id="GO:0003723">
    <property type="term" value="F:RNA binding"/>
    <property type="evidence" value="ECO:0007669"/>
    <property type="project" value="TreeGrafter"/>
</dbReference>
<dbReference type="GO" id="GO:0003735">
    <property type="term" value="F:structural constituent of ribosome"/>
    <property type="evidence" value="ECO:0007669"/>
    <property type="project" value="InterPro"/>
</dbReference>
<dbReference type="GO" id="GO:0006412">
    <property type="term" value="P:translation"/>
    <property type="evidence" value="ECO:0007669"/>
    <property type="project" value="UniProtKB-UniRule"/>
</dbReference>
<dbReference type="FunFam" id="3.30.230.10:FF:000001">
    <property type="entry name" value="30S ribosomal protein S9"/>
    <property type="match status" value="1"/>
</dbReference>
<dbReference type="Gene3D" id="3.30.230.10">
    <property type="match status" value="1"/>
</dbReference>
<dbReference type="HAMAP" id="MF_00532_B">
    <property type="entry name" value="Ribosomal_uS9_B"/>
    <property type="match status" value="1"/>
</dbReference>
<dbReference type="InterPro" id="IPR020568">
    <property type="entry name" value="Ribosomal_Su5_D2-typ_SF"/>
</dbReference>
<dbReference type="InterPro" id="IPR000754">
    <property type="entry name" value="Ribosomal_uS9"/>
</dbReference>
<dbReference type="InterPro" id="IPR023035">
    <property type="entry name" value="Ribosomal_uS9_bac/plastid"/>
</dbReference>
<dbReference type="InterPro" id="IPR020574">
    <property type="entry name" value="Ribosomal_uS9_CS"/>
</dbReference>
<dbReference type="InterPro" id="IPR014721">
    <property type="entry name" value="Ribsml_uS5_D2-typ_fold_subgr"/>
</dbReference>
<dbReference type="NCBIfam" id="NF001099">
    <property type="entry name" value="PRK00132.1"/>
    <property type="match status" value="1"/>
</dbReference>
<dbReference type="PANTHER" id="PTHR21569">
    <property type="entry name" value="RIBOSOMAL PROTEIN S9"/>
    <property type="match status" value="1"/>
</dbReference>
<dbReference type="PANTHER" id="PTHR21569:SF1">
    <property type="entry name" value="SMALL RIBOSOMAL SUBUNIT PROTEIN US9M"/>
    <property type="match status" value="1"/>
</dbReference>
<dbReference type="Pfam" id="PF00380">
    <property type="entry name" value="Ribosomal_S9"/>
    <property type="match status" value="1"/>
</dbReference>
<dbReference type="SUPFAM" id="SSF54211">
    <property type="entry name" value="Ribosomal protein S5 domain 2-like"/>
    <property type="match status" value="1"/>
</dbReference>
<dbReference type="PROSITE" id="PS00360">
    <property type="entry name" value="RIBOSOMAL_S9"/>
    <property type="match status" value="1"/>
</dbReference>
<reference key="1">
    <citation type="journal article" date="2009" name="Genome Biol.">
        <title>Genomic and genetic analyses of diversity and plant interactions of Pseudomonas fluorescens.</title>
        <authorList>
            <person name="Silby M.W."/>
            <person name="Cerdeno-Tarraga A.M."/>
            <person name="Vernikos G.S."/>
            <person name="Giddens S.R."/>
            <person name="Jackson R.W."/>
            <person name="Preston G.M."/>
            <person name="Zhang X.-X."/>
            <person name="Moon C.D."/>
            <person name="Gehrig S.M."/>
            <person name="Godfrey S.A.C."/>
            <person name="Knight C.G."/>
            <person name="Malone J.G."/>
            <person name="Robinson Z."/>
            <person name="Spiers A.J."/>
            <person name="Harris S."/>
            <person name="Challis G.L."/>
            <person name="Yaxley A.M."/>
            <person name="Harris D."/>
            <person name="Seeger K."/>
            <person name="Murphy L."/>
            <person name="Rutter S."/>
            <person name="Squares R."/>
            <person name="Quail M.A."/>
            <person name="Saunders E."/>
            <person name="Mavromatis K."/>
            <person name="Brettin T.S."/>
            <person name="Bentley S.D."/>
            <person name="Hothersall J."/>
            <person name="Stephens E."/>
            <person name="Thomas C.M."/>
            <person name="Parkhill J."/>
            <person name="Levy S.B."/>
            <person name="Rainey P.B."/>
            <person name="Thomson N.R."/>
        </authorList>
    </citation>
    <scope>NUCLEOTIDE SEQUENCE [LARGE SCALE GENOMIC DNA]</scope>
    <source>
        <strain>SBW25</strain>
    </source>
</reference>
<sequence length="130" mass="14616">MSATQNYGTGRRKTATARVFLRPGTGNISINNRTLDNFFGRETARMVVRQPLELTETVEKFDIYVTVIGGGVSGQAGAIRHGITRALMQYDETLRGALRKAGFVTRDAREVERKKVGLRKARKRPQYSKR</sequence>
<gene>
    <name evidence="1" type="primary">rpsI</name>
    <name type="ordered locus">PFLU_0840</name>
</gene>
<comment type="similarity">
    <text evidence="1">Belongs to the universal ribosomal protein uS9 family.</text>
</comment>
<accession>C3K6E2</accession>
<proteinExistence type="inferred from homology"/>
<keyword id="KW-0687">Ribonucleoprotein</keyword>
<keyword id="KW-0689">Ribosomal protein</keyword>
<name>RS9_PSEFS</name>